<evidence type="ECO:0000250" key="1"/>
<evidence type="ECO:0000305" key="2"/>
<sequence length="964" mass="114819">MKLKKLYIFYFDIYEYFLCDLQLSETNEILKYIKNNIDKYTNSFNSSYIILKDFNIITNEVELQSYYNFTEDSKIKLNNTDLILFMTPYKIERIYSKYNRNFNQYRWFYILNNIEPAGSYKINMSNLQNINIYDKNKTAYYCKNPKLLFLTPIEIDKFIPVSRVSIDIECQHFGEFPTPNKFPISHICIDWFMESNINPVKKIITLINYEIIKNYKGEQKDRFIYTEIDELLTKDKVYITIYCTEKYMLHFILYTLRKDFDYILTYNGHSFDFTYIQGRRKFYNLNELCLVNAHKSNELKIYSYNKDTTYEIDSNNGIIFLDLYNYIKKIYNYNSYKLGEIAKERFNILSKIIDNGDEYIIMPLDTADNKNKVSIFYDVIRTANYCFINNIPYKIKDKTKIINDKEKLYDPISIENSLYQQFKIYKNNTPISDETTKVMLSKDDVDIGNKNAYVNFTKDKSDDIAYYCTHDTVLCNCIFKYDMIHDKVIAFSNEYLLPQYMSFKYKSTTNISGLLLKTLFCNRSMIVSGNLEFEKFEGGYVLEPKQKYIDSITAVFDFNSEYPSNIIEANLSPEKVEKVIKLQDDEYAVDIVENYLKEKYPYPDYCYMLIKKDKTYKFIVMDRRKPGIITQMIDKGMKSKNEYKNLKNINKNNPVLYNYYTSALYSKKITINSLYGLLGSERFDFNSPYCAEYCTALGQKCIKYIKNLVDKSRYIDNNLYLNEQNNPFSNEPVITRYSGNLDVNFTFYIIYGDTDSLFINIKFDNKFDNKEDLVNKSHECFQFLSNIINDEKNIILSKNFNFEYEKMYIWMLLLAKKKYIGEVVSSMNPLQLISDSKGTALIRRDCTEIHKTILKNTIDILKEYLTNNCTIQDVNNKINNYLMFTFKNIIENIQNLDINEFKKSVKYTGIYKDPNFYIELCVKKYNSKNPNDKIVKGQRFDFIYAHEIDIWDIETKKWNTKYTS</sequence>
<organism>
    <name type="scientific">Choristoneura biennis entomopoxvirus</name>
    <name type="common">CbEPV</name>
    <dbReference type="NCBI Taxonomy" id="10288"/>
    <lineage>
        <taxon>Viruses</taxon>
        <taxon>Varidnaviria</taxon>
        <taxon>Bamfordvirae</taxon>
        <taxon>Nucleocytoviricota</taxon>
        <taxon>Pokkesviricetes</taxon>
        <taxon>Chitovirales</taxon>
        <taxon>Poxviridae</taxon>
        <taxon>Entomopoxvirinae</taxon>
        <taxon>Betaentomopoxvirus</taxon>
    </lineage>
</organism>
<dbReference type="EC" id="2.7.7.7"/>
<dbReference type="EMBL" id="X57314">
    <property type="protein sequence ID" value="CAA40566.1"/>
    <property type="molecule type" value="Genomic_DNA"/>
</dbReference>
<dbReference type="PIR" id="S25855">
    <property type="entry name" value="S25855"/>
</dbReference>
<dbReference type="SMR" id="P30319"/>
<dbReference type="GO" id="GO:0003677">
    <property type="term" value="F:DNA binding"/>
    <property type="evidence" value="ECO:0007669"/>
    <property type="project" value="UniProtKB-KW"/>
</dbReference>
<dbReference type="GO" id="GO:0003887">
    <property type="term" value="F:DNA-directed DNA polymerase activity"/>
    <property type="evidence" value="ECO:0007669"/>
    <property type="project" value="UniProtKB-KW"/>
</dbReference>
<dbReference type="GO" id="GO:0000166">
    <property type="term" value="F:nucleotide binding"/>
    <property type="evidence" value="ECO:0007669"/>
    <property type="project" value="InterPro"/>
</dbReference>
<dbReference type="GO" id="GO:0006261">
    <property type="term" value="P:DNA-templated DNA replication"/>
    <property type="evidence" value="ECO:0007669"/>
    <property type="project" value="TreeGrafter"/>
</dbReference>
<dbReference type="GO" id="GO:0039693">
    <property type="term" value="P:viral DNA genome replication"/>
    <property type="evidence" value="ECO:0007669"/>
    <property type="project" value="UniProtKB-KW"/>
</dbReference>
<dbReference type="Gene3D" id="3.90.1600.10">
    <property type="entry name" value="Palm domain of DNA polymerase"/>
    <property type="match status" value="1"/>
</dbReference>
<dbReference type="Gene3D" id="3.30.420.10">
    <property type="entry name" value="Ribonuclease H-like superfamily/Ribonuclease H"/>
    <property type="match status" value="1"/>
</dbReference>
<dbReference type="InterPro" id="IPR006172">
    <property type="entry name" value="DNA-dir_DNA_pol_B"/>
</dbReference>
<dbReference type="InterPro" id="IPR017964">
    <property type="entry name" value="DNA-dir_DNA_pol_B_CS"/>
</dbReference>
<dbReference type="InterPro" id="IPR006133">
    <property type="entry name" value="DNA-dir_DNA_pol_B_exonuc"/>
</dbReference>
<dbReference type="InterPro" id="IPR006134">
    <property type="entry name" value="DNA-dir_DNA_pol_B_multi_dom"/>
</dbReference>
<dbReference type="InterPro" id="IPR013617">
    <property type="entry name" value="DNA-dir_DNA_pol_B_vir_insert"/>
</dbReference>
<dbReference type="InterPro" id="IPR043502">
    <property type="entry name" value="DNA/RNA_pol_sf"/>
</dbReference>
<dbReference type="InterPro" id="IPR023211">
    <property type="entry name" value="DNA_pol_palm_dom_sf"/>
</dbReference>
<dbReference type="InterPro" id="IPR050240">
    <property type="entry name" value="DNA_pol_type-B"/>
</dbReference>
<dbReference type="InterPro" id="IPR012337">
    <property type="entry name" value="RNaseH-like_sf"/>
</dbReference>
<dbReference type="InterPro" id="IPR036397">
    <property type="entry name" value="RNaseH_sf"/>
</dbReference>
<dbReference type="PANTHER" id="PTHR10322">
    <property type="entry name" value="DNA POLYMERASE CATALYTIC SUBUNIT"/>
    <property type="match status" value="1"/>
</dbReference>
<dbReference type="PANTHER" id="PTHR10322:SF23">
    <property type="entry name" value="DNA POLYMERASE DELTA CATALYTIC SUBUNIT"/>
    <property type="match status" value="1"/>
</dbReference>
<dbReference type="Pfam" id="PF00136">
    <property type="entry name" value="DNA_pol_B"/>
    <property type="match status" value="1"/>
</dbReference>
<dbReference type="Pfam" id="PF08408">
    <property type="entry name" value="DNA_pol_B_3"/>
    <property type="match status" value="1"/>
</dbReference>
<dbReference type="Pfam" id="PF03104">
    <property type="entry name" value="DNA_pol_B_exo1"/>
    <property type="match status" value="1"/>
</dbReference>
<dbReference type="PRINTS" id="PR00106">
    <property type="entry name" value="DNAPOLB"/>
</dbReference>
<dbReference type="SMART" id="SM00486">
    <property type="entry name" value="POLBc"/>
    <property type="match status" value="1"/>
</dbReference>
<dbReference type="SUPFAM" id="SSF56672">
    <property type="entry name" value="DNA/RNA polymerases"/>
    <property type="match status" value="1"/>
</dbReference>
<dbReference type="SUPFAM" id="SSF53098">
    <property type="entry name" value="Ribonuclease H-like"/>
    <property type="match status" value="1"/>
</dbReference>
<dbReference type="PROSITE" id="PS00116">
    <property type="entry name" value="DNA_POLYMERASE_B"/>
    <property type="match status" value="1"/>
</dbReference>
<protein>
    <recommendedName>
        <fullName>DNA polymerase</fullName>
        <ecNumber>2.7.7.7</ecNumber>
    </recommendedName>
</protein>
<accession>P30319</accession>
<name>DPOL_CBEPV</name>
<comment type="function">
    <text evidence="1">Catalyzes DNA synthesis.</text>
</comment>
<comment type="catalytic activity">
    <reaction>
        <text>DNA(n) + a 2'-deoxyribonucleoside 5'-triphosphate = DNA(n+1) + diphosphate</text>
        <dbReference type="Rhea" id="RHEA:22508"/>
        <dbReference type="Rhea" id="RHEA-COMP:17339"/>
        <dbReference type="Rhea" id="RHEA-COMP:17340"/>
        <dbReference type="ChEBI" id="CHEBI:33019"/>
        <dbReference type="ChEBI" id="CHEBI:61560"/>
        <dbReference type="ChEBI" id="CHEBI:173112"/>
        <dbReference type="EC" id="2.7.7.7"/>
    </reaction>
</comment>
<comment type="similarity">
    <text evidence="2">Belongs to the DNA polymerase type-B family.</text>
</comment>
<reference key="1">
    <citation type="journal article" date="1991" name="DNA Seq.">
        <title>Identification and sequencing of the Choristoneura biennis entomopoxvirus DNA polymerase gene.</title>
        <authorList>
            <person name="Mustafa A."/>
            <person name="Yuen L."/>
        </authorList>
    </citation>
    <scope>NUCLEOTIDE SEQUENCE [GENOMIC DNA]</scope>
</reference>
<feature type="chain" id="PRO_0000046537" description="DNA polymerase">
    <location>
        <begin position="1"/>
        <end position="964"/>
    </location>
</feature>
<organismHost>
    <name type="scientific">Choristoneura fumiferana</name>
    <name type="common">Spruce budworm moth</name>
    <name type="synonym">Archips fumiferana</name>
    <dbReference type="NCBI Taxonomy" id="7141"/>
</organismHost>
<proteinExistence type="inferred from homology"/>
<keyword id="KW-0235">DNA replication</keyword>
<keyword id="KW-0238">DNA-binding</keyword>
<keyword id="KW-0239">DNA-directed DNA polymerase</keyword>
<keyword id="KW-0548">Nucleotidyltransferase</keyword>
<keyword id="KW-0808">Transferase</keyword>
<keyword id="KW-1194">Viral DNA replication</keyword>
<gene>
    <name type="primary">POL</name>
</gene>